<proteinExistence type="inferred from homology"/>
<dbReference type="EMBL" id="CP000425">
    <property type="protein sequence ID" value="ABJ72913.1"/>
    <property type="molecule type" value="Genomic_DNA"/>
</dbReference>
<dbReference type="RefSeq" id="WP_011676203.1">
    <property type="nucleotide sequence ID" value="NC_008527.1"/>
</dbReference>
<dbReference type="SMR" id="Q02YQ9"/>
<dbReference type="GeneID" id="61109531"/>
<dbReference type="KEGG" id="llc:LACR_1397"/>
<dbReference type="HOGENOM" id="CLU_045647_5_3_9"/>
<dbReference type="Proteomes" id="UP000000240">
    <property type="component" value="Chromosome"/>
</dbReference>
<dbReference type="GO" id="GO:0005737">
    <property type="term" value="C:cytoplasm"/>
    <property type="evidence" value="ECO:0007669"/>
    <property type="project" value="UniProtKB-SubCell"/>
</dbReference>
<dbReference type="GO" id="GO:0051301">
    <property type="term" value="P:cell division"/>
    <property type="evidence" value="ECO:0007669"/>
    <property type="project" value="UniProtKB-KW"/>
</dbReference>
<dbReference type="GO" id="GO:0051304">
    <property type="term" value="P:chromosome separation"/>
    <property type="evidence" value="ECO:0007669"/>
    <property type="project" value="InterPro"/>
</dbReference>
<dbReference type="GO" id="GO:0006260">
    <property type="term" value="P:DNA replication"/>
    <property type="evidence" value="ECO:0007669"/>
    <property type="project" value="UniProtKB-UniRule"/>
</dbReference>
<dbReference type="Gene3D" id="1.10.10.10">
    <property type="entry name" value="Winged helix-like DNA-binding domain superfamily/Winged helix DNA-binding domain"/>
    <property type="match status" value="2"/>
</dbReference>
<dbReference type="HAMAP" id="MF_01804">
    <property type="entry name" value="ScpB"/>
    <property type="match status" value="1"/>
</dbReference>
<dbReference type="InterPro" id="IPR005234">
    <property type="entry name" value="ScpB_csome_segregation"/>
</dbReference>
<dbReference type="InterPro" id="IPR036388">
    <property type="entry name" value="WH-like_DNA-bd_sf"/>
</dbReference>
<dbReference type="InterPro" id="IPR036390">
    <property type="entry name" value="WH_DNA-bd_sf"/>
</dbReference>
<dbReference type="NCBIfam" id="TIGR00281">
    <property type="entry name" value="SMC-Scp complex subunit ScpB"/>
    <property type="match status" value="1"/>
</dbReference>
<dbReference type="PANTHER" id="PTHR34298">
    <property type="entry name" value="SEGREGATION AND CONDENSATION PROTEIN B"/>
    <property type="match status" value="1"/>
</dbReference>
<dbReference type="PANTHER" id="PTHR34298:SF2">
    <property type="entry name" value="SEGREGATION AND CONDENSATION PROTEIN B"/>
    <property type="match status" value="1"/>
</dbReference>
<dbReference type="Pfam" id="PF04079">
    <property type="entry name" value="SMC_ScpB"/>
    <property type="match status" value="1"/>
</dbReference>
<dbReference type="PIRSF" id="PIRSF019345">
    <property type="entry name" value="ScpB"/>
    <property type="match status" value="1"/>
</dbReference>
<dbReference type="SUPFAM" id="SSF46785">
    <property type="entry name" value="Winged helix' DNA-binding domain"/>
    <property type="match status" value="2"/>
</dbReference>
<organism>
    <name type="scientific">Lactococcus lactis subsp. cremoris (strain SK11)</name>
    <dbReference type="NCBI Taxonomy" id="272622"/>
    <lineage>
        <taxon>Bacteria</taxon>
        <taxon>Bacillati</taxon>
        <taxon>Bacillota</taxon>
        <taxon>Bacilli</taxon>
        <taxon>Lactobacillales</taxon>
        <taxon>Streptococcaceae</taxon>
        <taxon>Lactococcus</taxon>
        <taxon>Lactococcus cremoris subsp. cremoris</taxon>
    </lineage>
</organism>
<name>SCPB_LACLS</name>
<keyword id="KW-0131">Cell cycle</keyword>
<keyword id="KW-0132">Cell division</keyword>
<keyword id="KW-0159">Chromosome partition</keyword>
<keyword id="KW-0963">Cytoplasm</keyword>
<accession>Q02YQ9</accession>
<gene>
    <name evidence="1" type="primary">scpB</name>
    <name type="ordered locus">LACR_1397</name>
</gene>
<reference key="1">
    <citation type="journal article" date="2006" name="Proc. Natl. Acad. Sci. U.S.A.">
        <title>Comparative genomics of the lactic acid bacteria.</title>
        <authorList>
            <person name="Makarova K.S."/>
            <person name="Slesarev A."/>
            <person name="Wolf Y.I."/>
            <person name="Sorokin A."/>
            <person name="Mirkin B."/>
            <person name="Koonin E.V."/>
            <person name="Pavlov A."/>
            <person name="Pavlova N."/>
            <person name="Karamychev V."/>
            <person name="Polouchine N."/>
            <person name="Shakhova V."/>
            <person name="Grigoriev I."/>
            <person name="Lou Y."/>
            <person name="Rohksar D."/>
            <person name="Lucas S."/>
            <person name="Huang K."/>
            <person name="Goodstein D.M."/>
            <person name="Hawkins T."/>
            <person name="Plengvidhya V."/>
            <person name="Welker D."/>
            <person name="Hughes J."/>
            <person name="Goh Y."/>
            <person name="Benson A."/>
            <person name="Baldwin K."/>
            <person name="Lee J.-H."/>
            <person name="Diaz-Muniz I."/>
            <person name="Dosti B."/>
            <person name="Smeianov V."/>
            <person name="Wechter W."/>
            <person name="Barabote R."/>
            <person name="Lorca G."/>
            <person name="Altermann E."/>
            <person name="Barrangou R."/>
            <person name="Ganesan B."/>
            <person name="Xie Y."/>
            <person name="Rawsthorne H."/>
            <person name="Tamir D."/>
            <person name="Parker C."/>
            <person name="Breidt F."/>
            <person name="Broadbent J.R."/>
            <person name="Hutkins R."/>
            <person name="O'Sullivan D."/>
            <person name="Steele J."/>
            <person name="Unlu G."/>
            <person name="Saier M.H. Jr."/>
            <person name="Klaenhammer T."/>
            <person name="Richardson P."/>
            <person name="Kozyavkin S."/>
            <person name="Weimer B.C."/>
            <person name="Mills D.A."/>
        </authorList>
    </citation>
    <scope>NUCLEOTIDE SEQUENCE [LARGE SCALE GENOMIC DNA]</scope>
    <source>
        <strain>SK11</strain>
    </source>
</reference>
<protein>
    <recommendedName>
        <fullName evidence="1">Segregation and condensation protein B</fullName>
    </recommendedName>
</protein>
<comment type="function">
    <text evidence="1">Participates in chromosomal partition during cell division. May act via the formation of a condensin-like complex containing Smc and ScpA that pull DNA away from mid-cell into both cell halves.</text>
</comment>
<comment type="subunit">
    <text evidence="1">Homodimer. Homodimerization may be required to stabilize the binding of ScpA to the Smc head domains. Component of a cohesin-like complex composed of ScpA, ScpB and the Smc homodimer, in which ScpA and ScpB bind to the head domain of Smc. The presence of the three proteins is required for the association of the complex with DNA.</text>
</comment>
<comment type="subcellular location">
    <subcellularLocation>
        <location evidence="1">Cytoplasm</location>
    </subcellularLocation>
    <text evidence="1">Associated with two foci at the outer edges of the nucleoid region in young cells, and at four foci within both cell halves in older cells.</text>
</comment>
<comment type="similarity">
    <text evidence="1">Belongs to the ScpB family.</text>
</comment>
<sequence length="188" mass="21174">MNKTATCELLLFVSGEAGLTLTELSSLTEMSKQACQQQIDYLKEKYHSDRESALTIIETAGKYRMATKEDFSEILKNYAKTPLNQSLSKSALEVLSIIAYKQPLTRIEIDQLRGVNSSGVLSTLRAFDLVEKVGQVEAPGRPSLYATTEFFLDYIGINNLEELPEIDESRYVAEQQTLFNESEENENQ</sequence>
<evidence type="ECO:0000255" key="1">
    <source>
        <dbReference type="HAMAP-Rule" id="MF_01804"/>
    </source>
</evidence>
<feature type="chain" id="PRO_1000069957" description="Segregation and condensation protein B">
    <location>
        <begin position="1"/>
        <end position="188"/>
    </location>
</feature>